<name>DIF1_YEAS7</name>
<keyword id="KW-0963">Cytoplasm</keyword>
<keyword id="KW-0539">Nucleus</keyword>
<keyword id="KW-0597">Phosphoprotein</keyword>
<accession>A7A1V6</accession>
<evidence type="ECO:0000250" key="1"/>
<evidence type="ECO:0000256" key="2">
    <source>
        <dbReference type="SAM" id="MobiDB-lite"/>
    </source>
</evidence>
<evidence type="ECO:0000305" key="3"/>
<feature type="chain" id="PRO_0000399016" description="Damage-regulated import facilitator 1">
    <location>
        <begin position="1"/>
        <end position="131"/>
    </location>
</feature>
<feature type="region of interest" description="Disordered" evidence="2">
    <location>
        <begin position="1"/>
        <end position="37"/>
    </location>
</feature>
<feature type="region of interest" description="Disordered" evidence="2">
    <location>
        <begin position="107"/>
        <end position="131"/>
    </location>
</feature>
<feature type="compositionally biased region" description="Low complexity" evidence="2">
    <location>
        <begin position="16"/>
        <end position="30"/>
    </location>
</feature>
<feature type="compositionally biased region" description="Basic and acidic residues" evidence="2">
    <location>
        <begin position="107"/>
        <end position="122"/>
    </location>
</feature>
<sequence length="131" mass="14909">MDAQLEWASSLVPKRQLQQQQQQEQQQQQQDFHKDQLMTVGMRIRQRVDQGYASRTPSTSDASLQPGVIRDYSSVIVPQFTRSPLPTANSLPPMLINQRTMSTEASSLEKWDVAEPAAEHETMVNGSKRRL</sequence>
<proteinExistence type="inferred from homology"/>
<dbReference type="EMBL" id="AAFW02000171">
    <property type="protein sequence ID" value="EDN59334.1"/>
    <property type="molecule type" value="Genomic_DNA"/>
</dbReference>
<dbReference type="SMR" id="A7A1V6"/>
<dbReference type="HOGENOM" id="CLU_1887371_0_0_1"/>
<dbReference type="Proteomes" id="UP000007060">
    <property type="component" value="Unassembled WGS sequence"/>
</dbReference>
<dbReference type="GO" id="GO:0005737">
    <property type="term" value="C:cytoplasm"/>
    <property type="evidence" value="ECO:0007669"/>
    <property type="project" value="UniProtKB-SubCell"/>
</dbReference>
<dbReference type="GO" id="GO:0005634">
    <property type="term" value="C:nucleus"/>
    <property type="evidence" value="ECO:0007669"/>
    <property type="project" value="UniProtKB-SubCell"/>
</dbReference>
<dbReference type="GO" id="GO:1990846">
    <property type="term" value="F:ribonucleoside-diphosphate reductase inhibitor activity"/>
    <property type="evidence" value="ECO:0007669"/>
    <property type="project" value="TreeGrafter"/>
</dbReference>
<dbReference type="GO" id="GO:0008104">
    <property type="term" value="P:protein localization"/>
    <property type="evidence" value="ECO:0007669"/>
    <property type="project" value="TreeGrafter"/>
</dbReference>
<dbReference type="InterPro" id="IPR013900">
    <property type="entry name" value="RNR_inhibitor"/>
</dbReference>
<dbReference type="PANTHER" id="PTHR28081:SF1">
    <property type="entry name" value="DAMAGE-REGULATED IMPORT FACILITATOR 1"/>
    <property type="match status" value="1"/>
</dbReference>
<dbReference type="PANTHER" id="PTHR28081">
    <property type="entry name" value="DAMAGE-REGULATED IMPORT FACILITATOR 1-RELATED"/>
    <property type="match status" value="1"/>
</dbReference>
<protein>
    <recommendedName>
        <fullName>Damage-regulated import facilitator 1</fullName>
    </recommendedName>
</protein>
<comment type="function">
    <text evidence="1">Mediates the nuclear localization of RNR2 and RNR4, 2 subunits of the ribonucleotide reductase.</text>
</comment>
<comment type="subunit">
    <text evidence="1">Interacts with RNR2 and RNR4.</text>
</comment>
<comment type="subcellular location">
    <subcellularLocation>
        <location evidence="1">Cytoplasm</location>
    </subcellularLocation>
    <subcellularLocation>
        <location evidence="1">Nucleus</location>
    </subcellularLocation>
</comment>
<comment type="PTM">
    <text evidence="1">Phosphorylated by DUN1 in response to DNA damage which leads to its degradation.</text>
</comment>
<comment type="similarity">
    <text evidence="3">Belongs to the DIF1/spd1 family.</text>
</comment>
<reference key="1">
    <citation type="journal article" date="2007" name="Proc. Natl. Acad. Sci. U.S.A.">
        <title>Genome sequencing and comparative analysis of Saccharomyces cerevisiae strain YJM789.</title>
        <authorList>
            <person name="Wei W."/>
            <person name="McCusker J.H."/>
            <person name="Hyman R.W."/>
            <person name="Jones T."/>
            <person name="Ning Y."/>
            <person name="Cao Z."/>
            <person name="Gu Z."/>
            <person name="Bruno D."/>
            <person name="Miranda M."/>
            <person name="Nguyen M."/>
            <person name="Wilhelmy J."/>
            <person name="Komp C."/>
            <person name="Tamse R."/>
            <person name="Wang X."/>
            <person name="Jia P."/>
            <person name="Luedi P."/>
            <person name="Oefner P.J."/>
            <person name="David L."/>
            <person name="Dietrich F.S."/>
            <person name="Li Y."/>
            <person name="Davis R.W."/>
            <person name="Steinmetz L.M."/>
        </authorList>
    </citation>
    <scope>NUCLEOTIDE SEQUENCE [LARGE SCALE GENOMIC DNA]</scope>
    <source>
        <strain>YJM789</strain>
    </source>
</reference>
<organism>
    <name type="scientific">Saccharomyces cerevisiae (strain YJM789)</name>
    <name type="common">Baker's yeast</name>
    <dbReference type="NCBI Taxonomy" id="307796"/>
    <lineage>
        <taxon>Eukaryota</taxon>
        <taxon>Fungi</taxon>
        <taxon>Dikarya</taxon>
        <taxon>Ascomycota</taxon>
        <taxon>Saccharomycotina</taxon>
        <taxon>Saccharomycetes</taxon>
        <taxon>Saccharomycetales</taxon>
        <taxon>Saccharomycetaceae</taxon>
        <taxon>Saccharomyces</taxon>
    </lineage>
</organism>
<gene>
    <name type="primary">DIF1</name>
    <name type="ORF">SCY_3984</name>
</gene>